<comment type="function">
    <text evidence="1">Catalyzes a reversible aldol reaction between acetaldehyde and D-glyceraldehyde 3-phosphate to generate 2-deoxy-D-ribose 5-phosphate.</text>
</comment>
<comment type="catalytic activity">
    <reaction evidence="1">
        <text>2-deoxy-D-ribose 5-phosphate = D-glyceraldehyde 3-phosphate + acetaldehyde</text>
        <dbReference type="Rhea" id="RHEA:12821"/>
        <dbReference type="ChEBI" id="CHEBI:15343"/>
        <dbReference type="ChEBI" id="CHEBI:59776"/>
        <dbReference type="ChEBI" id="CHEBI:62877"/>
        <dbReference type="EC" id="4.1.2.4"/>
    </reaction>
</comment>
<comment type="pathway">
    <text evidence="1">Carbohydrate degradation; 2-deoxy-D-ribose 1-phosphate degradation; D-glyceraldehyde 3-phosphate and acetaldehyde from 2-deoxy-alpha-D-ribose 1-phosphate: step 2/2.</text>
</comment>
<comment type="subcellular location">
    <subcellularLocation>
        <location evidence="1">Cytoplasm</location>
    </subcellularLocation>
</comment>
<comment type="similarity">
    <text evidence="1">Belongs to the DeoC/FbaB aldolase family. DeoC type 1 subfamily.</text>
</comment>
<protein>
    <recommendedName>
        <fullName evidence="1">Deoxyribose-phosphate aldolase</fullName>
        <shortName evidence="1">DERA</shortName>
        <ecNumber evidence="1">4.1.2.4</ecNumber>
    </recommendedName>
    <alternativeName>
        <fullName evidence="1">2-deoxy-D-ribose 5-phosphate aldolase</fullName>
    </alternativeName>
    <alternativeName>
        <fullName evidence="1">Phosphodeoxyriboaldolase</fullName>
        <shortName evidence="1">Deoxyriboaldolase</shortName>
    </alternativeName>
</protein>
<dbReference type="EC" id="4.1.2.4" evidence="1"/>
<dbReference type="EMBL" id="BA000011">
    <property type="protein sequence ID" value="BAB59318.1"/>
    <property type="molecule type" value="Genomic_DNA"/>
</dbReference>
<dbReference type="RefSeq" id="WP_010916431.1">
    <property type="nucleotide sequence ID" value="NC_002689.2"/>
</dbReference>
<dbReference type="SMR" id="Q97CC6"/>
<dbReference type="STRING" id="273116.gene:9380946"/>
<dbReference type="PaxDb" id="273116-14324390"/>
<dbReference type="GeneID" id="1441661"/>
<dbReference type="KEGG" id="tvo:TVG0183359"/>
<dbReference type="eggNOG" id="arCOG04320">
    <property type="taxonomic scope" value="Archaea"/>
</dbReference>
<dbReference type="HOGENOM" id="CLU_053595_0_2_2"/>
<dbReference type="OrthoDB" id="31145at2157"/>
<dbReference type="PhylomeDB" id="Q97CC6"/>
<dbReference type="UniPathway" id="UPA00002">
    <property type="reaction ID" value="UER00468"/>
</dbReference>
<dbReference type="Proteomes" id="UP000001017">
    <property type="component" value="Chromosome"/>
</dbReference>
<dbReference type="GO" id="GO:0005737">
    <property type="term" value="C:cytoplasm"/>
    <property type="evidence" value="ECO:0007669"/>
    <property type="project" value="UniProtKB-SubCell"/>
</dbReference>
<dbReference type="GO" id="GO:0004139">
    <property type="term" value="F:deoxyribose-phosphate aldolase activity"/>
    <property type="evidence" value="ECO:0007669"/>
    <property type="project" value="UniProtKB-UniRule"/>
</dbReference>
<dbReference type="GO" id="GO:0006018">
    <property type="term" value="P:2-deoxyribose 1-phosphate catabolic process"/>
    <property type="evidence" value="ECO:0007669"/>
    <property type="project" value="UniProtKB-UniRule"/>
</dbReference>
<dbReference type="GO" id="GO:0016052">
    <property type="term" value="P:carbohydrate catabolic process"/>
    <property type="evidence" value="ECO:0007669"/>
    <property type="project" value="TreeGrafter"/>
</dbReference>
<dbReference type="GO" id="GO:0009264">
    <property type="term" value="P:deoxyribonucleotide catabolic process"/>
    <property type="evidence" value="ECO:0007669"/>
    <property type="project" value="InterPro"/>
</dbReference>
<dbReference type="CDD" id="cd00959">
    <property type="entry name" value="DeoC"/>
    <property type="match status" value="1"/>
</dbReference>
<dbReference type="Gene3D" id="3.20.20.70">
    <property type="entry name" value="Aldolase class I"/>
    <property type="match status" value="1"/>
</dbReference>
<dbReference type="HAMAP" id="MF_00114">
    <property type="entry name" value="DeoC_type1"/>
    <property type="match status" value="1"/>
</dbReference>
<dbReference type="InterPro" id="IPR013785">
    <property type="entry name" value="Aldolase_TIM"/>
</dbReference>
<dbReference type="InterPro" id="IPR011343">
    <property type="entry name" value="DeoC"/>
</dbReference>
<dbReference type="InterPro" id="IPR002915">
    <property type="entry name" value="DeoC/FbaB/LacD_aldolase"/>
</dbReference>
<dbReference type="InterPro" id="IPR028581">
    <property type="entry name" value="DeoC_typeI"/>
</dbReference>
<dbReference type="NCBIfam" id="TIGR00126">
    <property type="entry name" value="deoC"/>
    <property type="match status" value="1"/>
</dbReference>
<dbReference type="PANTHER" id="PTHR10889">
    <property type="entry name" value="DEOXYRIBOSE-PHOSPHATE ALDOLASE"/>
    <property type="match status" value="1"/>
</dbReference>
<dbReference type="PANTHER" id="PTHR10889:SF1">
    <property type="entry name" value="DEOXYRIBOSE-PHOSPHATE ALDOLASE"/>
    <property type="match status" value="1"/>
</dbReference>
<dbReference type="PIRSF" id="PIRSF001357">
    <property type="entry name" value="DeoC"/>
    <property type="match status" value="1"/>
</dbReference>
<dbReference type="SMART" id="SM01133">
    <property type="entry name" value="DeoC"/>
    <property type="match status" value="1"/>
</dbReference>
<dbReference type="SUPFAM" id="SSF51569">
    <property type="entry name" value="Aldolase"/>
    <property type="match status" value="1"/>
</dbReference>
<evidence type="ECO:0000255" key="1">
    <source>
        <dbReference type="HAMAP-Rule" id="MF_00114"/>
    </source>
</evidence>
<reference key="1">
    <citation type="journal article" date="2000" name="Proc. Natl. Acad. Sci. U.S.A.">
        <title>Archaeal adaptation to higher temperatures revealed by genomic sequence of Thermoplasma volcanium.</title>
        <authorList>
            <person name="Kawashima T."/>
            <person name="Amano N."/>
            <person name="Koike H."/>
            <person name="Makino S."/>
            <person name="Higuchi S."/>
            <person name="Kawashima-Ohya Y."/>
            <person name="Watanabe K."/>
            <person name="Yamazaki M."/>
            <person name="Kanehori K."/>
            <person name="Kawamoto T."/>
            <person name="Nunoshiba T."/>
            <person name="Yamamoto Y."/>
            <person name="Aramaki H."/>
            <person name="Makino K."/>
            <person name="Suzuki M."/>
        </authorList>
    </citation>
    <scope>NUCLEOTIDE SEQUENCE [LARGE SCALE GENOMIC DNA]</scope>
    <source>
        <strain>ATCC 51530 / DSM 4299 / JCM 9571 / NBRC 15438 / GSS1</strain>
    </source>
</reference>
<sequence>MKYSLKTVMSLVDHSGLKPYLREDEIARLIGEASEMGNYSVCIEPIYGNFAVEYIKEKGYSLKVDVTLDFPFGSLPTSARKKIIEDSVYADEIDMVIPIGYVKSHRWDKVEQDINDVVSTARDLGLVSKIITEDGYLTLDEKLKTYDIVIRSAPDFIKTSTGFADKEFCKSLGNETGATPENVKLMSEIAKKIGSNIGIKAAGGIHTYDQVEKIIDSAGMIPEPSNIRLGMSGTKKLYEEMKKASVQQS</sequence>
<keyword id="KW-0963">Cytoplasm</keyword>
<keyword id="KW-0456">Lyase</keyword>
<keyword id="KW-0704">Schiff base</keyword>
<organism>
    <name type="scientific">Thermoplasma volcanium (strain ATCC 51530 / DSM 4299 / JCM 9571 / NBRC 15438 / GSS1)</name>
    <dbReference type="NCBI Taxonomy" id="273116"/>
    <lineage>
        <taxon>Archaea</taxon>
        <taxon>Methanobacteriati</taxon>
        <taxon>Thermoplasmatota</taxon>
        <taxon>Thermoplasmata</taxon>
        <taxon>Thermoplasmatales</taxon>
        <taxon>Thermoplasmataceae</taxon>
        <taxon>Thermoplasma</taxon>
    </lineage>
</organism>
<accession>Q97CC6</accession>
<proteinExistence type="inferred from homology"/>
<name>DEOC_THEVO</name>
<feature type="chain" id="PRO_0000057293" description="Deoxyribose-phosphate aldolase">
    <location>
        <begin position="1"/>
        <end position="249"/>
    </location>
</feature>
<feature type="active site" description="Proton donor/acceptor" evidence="1">
    <location>
        <position position="94"/>
    </location>
</feature>
<feature type="active site" description="Schiff-base intermediate with acetaldehyde" evidence="1">
    <location>
        <position position="158"/>
    </location>
</feature>
<feature type="active site" description="Proton donor/acceptor" evidence="1">
    <location>
        <position position="200"/>
    </location>
</feature>
<gene>
    <name evidence="1" type="primary">deoC</name>
    <name type="ordered locus">TV0176</name>
    <name type="ORF">TVG0183359</name>
</gene>